<comment type="function">
    <text evidence="1">Catalyzes the phosphorylation of the beta-carboxyl group of aspartic acid with ATP to yield 4-phospho-L-aspartate, which is involved in the branched biosynthetic pathway leading to the biosynthesis of amino acids lysine, threonine, isoleucine and methionine.</text>
</comment>
<comment type="catalytic activity">
    <reaction>
        <text>L-aspartate + ATP = 4-phospho-L-aspartate + ADP</text>
        <dbReference type="Rhea" id="RHEA:23776"/>
        <dbReference type="ChEBI" id="CHEBI:29991"/>
        <dbReference type="ChEBI" id="CHEBI:30616"/>
        <dbReference type="ChEBI" id="CHEBI:57535"/>
        <dbReference type="ChEBI" id="CHEBI:456216"/>
        <dbReference type="EC" id="2.7.2.4"/>
    </reaction>
</comment>
<comment type="activity regulation">
    <text evidence="1">Feedback inhibition by lysine and threonine.</text>
</comment>
<comment type="pathway">
    <text>Amino-acid biosynthesis; L-lysine biosynthesis via DAP pathway; (S)-tetrahydrodipicolinate from L-aspartate: step 1/4.</text>
</comment>
<comment type="pathway">
    <text>Amino-acid biosynthesis; L-methionine biosynthesis via de novo pathway; L-homoserine from L-aspartate: step 1/3.</text>
</comment>
<comment type="pathway">
    <text>Amino-acid biosynthesis; L-threonine biosynthesis; L-threonine from L-aspartate: step 1/5.</text>
</comment>
<comment type="subunit">
    <text>Heterotetramer consisting of 2 isoforms Alpha (catalytic and regulation) and of a homodimer of 2 isoforms Beta (regulation).</text>
</comment>
<comment type="alternative products">
    <event type="alternative initiation"/>
    <isoform>
        <id>P41403-1</id>
        <name>Alpha</name>
        <name>Aspartokinase subunit alpha</name>
        <sequence type="displayed"/>
    </isoform>
    <isoform>
        <id>P41403-2</id>
        <name>Beta</name>
        <name>Aspartokinase subunit beta</name>
        <sequence type="described" ref="VSP_018662"/>
    </isoform>
</comment>
<comment type="similarity">
    <text evidence="3">Belongs to the aspartokinase family.</text>
</comment>
<comment type="sequence caution" evidence="3">
    <conflict type="erroneous initiation">
        <sequence resource="EMBL-CDS" id="CAA78985"/>
    </conflict>
    <text>Truncated N-terminus.</text>
</comment>
<feature type="chain" id="PRO_0000002383" description="Aspartokinase">
    <location>
        <begin position="1"/>
        <end position="421"/>
    </location>
</feature>
<feature type="domain" description="ACT 1" evidence="2">
    <location>
        <begin position="267"/>
        <end position="348"/>
    </location>
</feature>
<feature type="domain" description="ACT 2" evidence="2">
    <location>
        <begin position="349"/>
        <end position="421"/>
    </location>
</feature>
<feature type="binding site" evidence="1">
    <location>
        <begin position="7"/>
        <end position="10"/>
    </location>
    <ligand>
        <name>ATP</name>
        <dbReference type="ChEBI" id="CHEBI:30616"/>
    </ligand>
</feature>
<feature type="binding site" evidence="1">
    <location>
        <begin position="25"/>
        <end position="30"/>
    </location>
    <ligand>
        <name>substrate</name>
    </ligand>
</feature>
<feature type="binding site" evidence="1">
    <location>
        <position position="41"/>
    </location>
    <ligand>
        <name>ATP</name>
        <dbReference type="ChEBI" id="CHEBI:30616"/>
    </ligand>
</feature>
<feature type="binding site" evidence="1">
    <location>
        <begin position="45"/>
        <end position="49"/>
    </location>
    <ligand>
        <name>substrate</name>
    </ligand>
</feature>
<feature type="binding site" evidence="1">
    <location>
        <position position="74"/>
    </location>
    <ligand>
        <name>substrate</name>
    </ligand>
</feature>
<feature type="binding site" evidence="1">
    <location>
        <begin position="125"/>
        <end position="126"/>
    </location>
    <ligand>
        <name>substrate</name>
    </ligand>
</feature>
<feature type="binding site" evidence="1">
    <location>
        <begin position="151"/>
        <end position="154"/>
    </location>
    <ligand>
        <name>substrate</name>
    </ligand>
</feature>
<feature type="binding site" evidence="1">
    <location>
        <position position="154"/>
    </location>
    <ligand>
        <name>substrate</name>
    </ligand>
</feature>
<feature type="binding site" evidence="1">
    <location>
        <begin position="174"/>
        <end position="175"/>
    </location>
    <ligand>
        <name>ATP</name>
        <dbReference type="ChEBI" id="CHEBI:30616"/>
    </ligand>
</feature>
<feature type="binding site" evidence="1">
    <location>
        <begin position="180"/>
        <end position="185"/>
    </location>
    <ligand>
        <name>ATP</name>
        <dbReference type="ChEBI" id="CHEBI:30616"/>
    </ligand>
</feature>
<feature type="binding site" evidence="1">
    <location>
        <position position="210"/>
    </location>
    <ligand>
        <name>ATP</name>
        <dbReference type="ChEBI" id="CHEBI:30616"/>
    </ligand>
</feature>
<feature type="binding site" evidence="1">
    <location>
        <begin position="274"/>
        <end position="279"/>
    </location>
    <ligand>
        <name>substrate</name>
    </ligand>
</feature>
<feature type="binding site" evidence="1">
    <location>
        <position position="274"/>
    </location>
    <ligand>
        <name>substrate</name>
    </ligand>
</feature>
<feature type="binding site" evidence="1">
    <location>
        <begin position="292"/>
        <end position="294"/>
    </location>
    <ligand>
        <name>substrate</name>
    </ligand>
</feature>
<feature type="binding site" evidence="1">
    <location>
        <position position="298"/>
    </location>
    <ligand>
        <name>substrate</name>
    </ligand>
</feature>
<feature type="binding site" evidence="1">
    <location>
        <begin position="360"/>
        <end position="361"/>
    </location>
    <ligand>
        <name>substrate</name>
    </ligand>
</feature>
<feature type="binding site" evidence="1">
    <location>
        <begin position="374"/>
        <end position="375"/>
    </location>
    <ligand>
        <name>substrate</name>
    </ligand>
</feature>
<feature type="binding site" evidence="1">
    <location>
        <begin position="381"/>
        <end position="382"/>
    </location>
    <ligand>
        <name>substrate</name>
    </ligand>
</feature>
<feature type="site" description="Contribution to the catalysis" evidence="1">
    <location>
        <position position="7"/>
    </location>
</feature>
<feature type="site" description="Contribution to the catalysis" evidence="1">
    <location>
        <position position="74"/>
    </location>
</feature>
<feature type="splice variant" id="VSP_018662" description="In isoform Beta." evidence="3">
    <location>
        <begin position="1"/>
        <end position="249"/>
    </location>
</feature>
<evidence type="ECO:0000250" key="1"/>
<evidence type="ECO:0000255" key="2">
    <source>
        <dbReference type="PROSITE-ProRule" id="PRU01007"/>
    </source>
</evidence>
<evidence type="ECO:0000305" key="3"/>
<organism>
    <name type="scientific">Mycolicibacterium smegmatis</name>
    <name type="common">Mycobacterium smegmatis</name>
    <dbReference type="NCBI Taxonomy" id="1772"/>
    <lineage>
        <taxon>Bacteria</taxon>
        <taxon>Bacillati</taxon>
        <taxon>Actinomycetota</taxon>
        <taxon>Actinomycetes</taxon>
        <taxon>Mycobacteriales</taxon>
        <taxon>Mycobacteriaceae</taxon>
        <taxon>Mycolicibacterium</taxon>
    </lineage>
</organism>
<dbReference type="EC" id="2.7.2.4"/>
<dbReference type="EMBL" id="Z17372">
    <property type="protein sequence ID" value="CAA78984.1"/>
    <property type="molecule type" value="Genomic_DNA"/>
</dbReference>
<dbReference type="EMBL" id="Z17372">
    <property type="protein sequence ID" value="CAA78985.1"/>
    <property type="status" value="ALT_INIT"/>
    <property type="molecule type" value="Genomic_DNA"/>
</dbReference>
<dbReference type="PIR" id="S42422">
    <property type="entry name" value="S42422"/>
</dbReference>
<dbReference type="RefSeq" id="WP_003897679.1">
    <property type="nucleotide sequence ID" value="NZ_UGQO01000001.1"/>
</dbReference>
<dbReference type="SMR" id="P41403"/>
<dbReference type="KEGG" id="msh:LI98_30950"/>
<dbReference type="KEGG" id="msn:LI99_30945"/>
<dbReference type="OMA" id="DNINIMM"/>
<dbReference type="UniPathway" id="UPA00034">
    <property type="reaction ID" value="UER00015"/>
</dbReference>
<dbReference type="UniPathway" id="UPA00050">
    <property type="reaction ID" value="UER00461"/>
</dbReference>
<dbReference type="UniPathway" id="UPA00051">
    <property type="reaction ID" value="UER00462"/>
</dbReference>
<dbReference type="GO" id="GO:0005829">
    <property type="term" value="C:cytosol"/>
    <property type="evidence" value="ECO:0007669"/>
    <property type="project" value="TreeGrafter"/>
</dbReference>
<dbReference type="GO" id="GO:0004072">
    <property type="term" value="F:aspartate kinase activity"/>
    <property type="evidence" value="ECO:0007669"/>
    <property type="project" value="UniProtKB-EC"/>
</dbReference>
<dbReference type="GO" id="GO:0005524">
    <property type="term" value="F:ATP binding"/>
    <property type="evidence" value="ECO:0007669"/>
    <property type="project" value="UniProtKB-KW"/>
</dbReference>
<dbReference type="GO" id="GO:0019877">
    <property type="term" value="P:diaminopimelate biosynthetic process"/>
    <property type="evidence" value="ECO:0007669"/>
    <property type="project" value="UniProtKB-KW"/>
</dbReference>
<dbReference type="GO" id="GO:0009090">
    <property type="term" value="P:homoserine biosynthetic process"/>
    <property type="evidence" value="ECO:0007669"/>
    <property type="project" value="TreeGrafter"/>
</dbReference>
<dbReference type="GO" id="GO:0009089">
    <property type="term" value="P:lysine biosynthetic process via diaminopimelate"/>
    <property type="evidence" value="ECO:0007669"/>
    <property type="project" value="UniProtKB-UniPathway"/>
</dbReference>
<dbReference type="GO" id="GO:0009088">
    <property type="term" value="P:threonine biosynthetic process"/>
    <property type="evidence" value="ECO:0007669"/>
    <property type="project" value="UniProtKB-UniPathway"/>
</dbReference>
<dbReference type="CDD" id="cd04261">
    <property type="entry name" value="AAK_AKii-LysC-BS"/>
    <property type="match status" value="1"/>
</dbReference>
<dbReference type="CDD" id="cd04923">
    <property type="entry name" value="ACT_AK-LysC-DapG-like_2"/>
    <property type="match status" value="1"/>
</dbReference>
<dbReference type="CDD" id="cd04913">
    <property type="entry name" value="ACT_AKii-LysC-BS-like_1"/>
    <property type="match status" value="1"/>
</dbReference>
<dbReference type="FunFam" id="3.30.2130.10:FF:000002">
    <property type="entry name" value="Aspartokinase"/>
    <property type="match status" value="1"/>
</dbReference>
<dbReference type="FunFam" id="3.40.1160.10:FF:000002">
    <property type="entry name" value="Aspartokinase"/>
    <property type="match status" value="1"/>
</dbReference>
<dbReference type="Gene3D" id="3.40.1160.10">
    <property type="entry name" value="Acetylglutamate kinase-like"/>
    <property type="match status" value="1"/>
</dbReference>
<dbReference type="Gene3D" id="3.30.2130.10">
    <property type="entry name" value="VC0802-like"/>
    <property type="match status" value="1"/>
</dbReference>
<dbReference type="InterPro" id="IPR036393">
    <property type="entry name" value="AceGlu_kinase-like_sf"/>
</dbReference>
<dbReference type="InterPro" id="IPR045865">
    <property type="entry name" value="ACT-like_dom_sf"/>
</dbReference>
<dbReference type="InterPro" id="IPR054352">
    <property type="entry name" value="ACT_Aspartokinase"/>
</dbReference>
<dbReference type="InterPro" id="IPR002912">
    <property type="entry name" value="ACT_dom"/>
</dbReference>
<dbReference type="InterPro" id="IPR041740">
    <property type="entry name" value="AKii-LysC-BS"/>
</dbReference>
<dbReference type="InterPro" id="IPR001048">
    <property type="entry name" value="Asp/Glu/Uridylate_kinase"/>
</dbReference>
<dbReference type="InterPro" id="IPR005260">
    <property type="entry name" value="Asp_kin_monofn"/>
</dbReference>
<dbReference type="InterPro" id="IPR001341">
    <property type="entry name" value="Asp_kinase"/>
</dbReference>
<dbReference type="InterPro" id="IPR018042">
    <property type="entry name" value="Aspartate_kinase_CS"/>
</dbReference>
<dbReference type="NCBIfam" id="TIGR00656">
    <property type="entry name" value="asp_kin_monofn"/>
    <property type="match status" value="1"/>
</dbReference>
<dbReference type="NCBIfam" id="TIGR00657">
    <property type="entry name" value="asp_kinases"/>
    <property type="match status" value="1"/>
</dbReference>
<dbReference type="NCBIfam" id="NF005153">
    <property type="entry name" value="PRK06635.1-1"/>
    <property type="match status" value="1"/>
</dbReference>
<dbReference type="NCBIfam" id="NF005154">
    <property type="entry name" value="PRK06635.1-2"/>
    <property type="match status" value="1"/>
</dbReference>
<dbReference type="NCBIfam" id="NF005155">
    <property type="entry name" value="PRK06635.1-4"/>
    <property type="match status" value="1"/>
</dbReference>
<dbReference type="PANTHER" id="PTHR21499">
    <property type="entry name" value="ASPARTATE KINASE"/>
    <property type="match status" value="1"/>
</dbReference>
<dbReference type="PANTHER" id="PTHR21499:SF3">
    <property type="entry name" value="ASPARTOKINASE"/>
    <property type="match status" value="1"/>
</dbReference>
<dbReference type="Pfam" id="PF00696">
    <property type="entry name" value="AA_kinase"/>
    <property type="match status" value="1"/>
</dbReference>
<dbReference type="Pfam" id="PF22468">
    <property type="entry name" value="ACT_9"/>
    <property type="match status" value="2"/>
</dbReference>
<dbReference type="PIRSF" id="PIRSF000726">
    <property type="entry name" value="Asp_kin"/>
    <property type="match status" value="1"/>
</dbReference>
<dbReference type="SUPFAM" id="SSF55021">
    <property type="entry name" value="ACT-like"/>
    <property type="match status" value="2"/>
</dbReference>
<dbReference type="SUPFAM" id="SSF53633">
    <property type="entry name" value="Carbamate kinase-like"/>
    <property type="match status" value="1"/>
</dbReference>
<dbReference type="PROSITE" id="PS51671">
    <property type="entry name" value="ACT"/>
    <property type="match status" value="1"/>
</dbReference>
<dbReference type="PROSITE" id="PS00324">
    <property type="entry name" value="ASPARTOKINASE"/>
    <property type="match status" value="1"/>
</dbReference>
<accession>P41403</accession>
<sequence length="421" mass="44458">MALVVQKYGGSSVADAERIRRVAERIVETKKAGNDVVVVVSAMGDTTDDLLDLARQVSPAPPPREMDMLLTAGERISNALVAMAIESLGAQARSFTGSQAGVITTGTHGNAKIIDVTPGRLRDALDEGQIVLVAGFQGVSQDSKDVTTLGRGGSDTTAVAVAAALDADVCEIYTDVDGIFTADPRIVPNARHLDTVSFEEMLEMAACGAKVLMLRCVEYARRYNVPIHVRSSYSDKPGTIVKGSIEDIPMEDAILTGVAHDRSEAKVTVVGLPDVPGYAAKVFRAVAEADVNIDMVLQNISKIEDGKTDITFTCARDNGPRAVEKLSALKSEIGFSQVLYDDHIGKVSLIGAGMRSHPGVTATFCEALAEAGINIDLISTSEIRISVLIKDTELDKAVSALHEAFGLGGDDEAVVYAGTGR</sequence>
<reference key="1">
    <citation type="journal article" date="1994" name="Mol. Microbiol.">
        <title>Isolation and characterization of the aspartokinase and aspartate semialdehyde dehydrogenase operon from mycobacteria.</title>
        <authorList>
            <person name="Cirillo J.D."/>
            <person name="Weisbrod T.R."/>
            <person name="Pascopella L."/>
            <person name="Bloom B.R."/>
            <person name="Jacobs W.R. Jr."/>
        </authorList>
    </citation>
    <scope>NUCLEOTIDE SEQUENCE [GENOMIC DNA]</scope>
    <source>
        <strain>ATCC 607 / DSM 43465 / JCM 20379 / NBRC 3207 / NRRL B-692</strain>
    </source>
</reference>
<proteinExistence type="inferred from homology"/>
<gene>
    <name type="primary">ask</name>
</gene>
<protein>
    <recommendedName>
        <fullName>Aspartokinase</fullName>
        <ecNumber>2.7.2.4</ecNumber>
    </recommendedName>
    <alternativeName>
        <fullName>Aspartate kinase</fullName>
        <shortName>ASK</shortName>
    </alternativeName>
</protein>
<name>AK_MYCSM</name>
<keyword id="KW-0024">Alternative initiation</keyword>
<keyword id="KW-0028">Amino-acid biosynthesis</keyword>
<keyword id="KW-0067">ATP-binding</keyword>
<keyword id="KW-0220">Diaminopimelate biosynthesis</keyword>
<keyword id="KW-0418">Kinase</keyword>
<keyword id="KW-0457">Lysine biosynthesis</keyword>
<keyword id="KW-0547">Nucleotide-binding</keyword>
<keyword id="KW-0677">Repeat</keyword>
<keyword id="KW-0808">Transferase</keyword>